<keyword id="KW-0227">DNA damage</keyword>
<keyword id="KW-0234">DNA repair</keyword>
<keyword id="KW-1185">Reference proteome</keyword>
<dbReference type="EMBL" id="CP001016">
    <property type="protein sequence ID" value="ACB94654.1"/>
    <property type="molecule type" value="Genomic_DNA"/>
</dbReference>
<dbReference type="RefSeq" id="WP_012384011.1">
    <property type="nucleotide sequence ID" value="NC_010581.1"/>
</dbReference>
<dbReference type="SMR" id="B2II71"/>
<dbReference type="STRING" id="395963.Bind_1011"/>
<dbReference type="KEGG" id="bid:Bind_1011"/>
<dbReference type="eggNOG" id="COG0323">
    <property type="taxonomic scope" value="Bacteria"/>
</dbReference>
<dbReference type="HOGENOM" id="CLU_004131_4_2_5"/>
<dbReference type="OrthoDB" id="9763467at2"/>
<dbReference type="Proteomes" id="UP000001695">
    <property type="component" value="Chromosome"/>
</dbReference>
<dbReference type="GO" id="GO:0032300">
    <property type="term" value="C:mismatch repair complex"/>
    <property type="evidence" value="ECO:0007669"/>
    <property type="project" value="InterPro"/>
</dbReference>
<dbReference type="GO" id="GO:0005524">
    <property type="term" value="F:ATP binding"/>
    <property type="evidence" value="ECO:0007669"/>
    <property type="project" value="InterPro"/>
</dbReference>
<dbReference type="GO" id="GO:0016887">
    <property type="term" value="F:ATP hydrolysis activity"/>
    <property type="evidence" value="ECO:0007669"/>
    <property type="project" value="InterPro"/>
</dbReference>
<dbReference type="GO" id="GO:0140664">
    <property type="term" value="F:ATP-dependent DNA damage sensor activity"/>
    <property type="evidence" value="ECO:0007669"/>
    <property type="project" value="InterPro"/>
</dbReference>
<dbReference type="GO" id="GO:0030983">
    <property type="term" value="F:mismatched DNA binding"/>
    <property type="evidence" value="ECO:0007669"/>
    <property type="project" value="InterPro"/>
</dbReference>
<dbReference type="GO" id="GO:0006298">
    <property type="term" value="P:mismatch repair"/>
    <property type="evidence" value="ECO:0007669"/>
    <property type="project" value="UniProtKB-UniRule"/>
</dbReference>
<dbReference type="CDD" id="cd16926">
    <property type="entry name" value="HATPase_MutL-MLH-PMS-like"/>
    <property type="match status" value="1"/>
</dbReference>
<dbReference type="CDD" id="cd00782">
    <property type="entry name" value="MutL_Trans"/>
    <property type="match status" value="1"/>
</dbReference>
<dbReference type="FunFam" id="3.30.565.10:FF:000003">
    <property type="entry name" value="DNA mismatch repair endonuclease MutL"/>
    <property type="match status" value="1"/>
</dbReference>
<dbReference type="Gene3D" id="3.30.230.10">
    <property type="match status" value="1"/>
</dbReference>
<dbReference type="Gene3D" id="3.30.565.10">
    <property type="entry name" value="Histidine kinase-like ATPase, C-terminal domain"/>
    <property type="match status" value="1"/>
</dbReference>
<dbReference type="Gene3D" id="3.30.1540.20">
    <property type="entry name" value="MutL, C-terminal domain, dimerisation subdomain"/>
    <property type="match status" value="1"/>
</dbReference>
<dbReference type="Gene3D" id="3.30.1370.100">
    <property type="entry name" value="MutL, C-terminal domain, regulatory subdomain"/>
    <property type="match status" value="1"/>
</dbReference>
<dbReference type="HAMAP" id="MF_00149">
    <property type="entry name" value="DNA_mis_repair"/>
    <property type="match status" value="1"/>
</dbReference>
<dbReference type="InterPro" id="IPR014762">
    <property type="entry name" value="DNA_mismatch_repair_CS"/>
</dbReference>
<dbReference type="InterPro" id="IPR020667">
    <property type="entry name" value="DNA_mismatch_repair_MutL"/>
</dbReference>
<dbReference type="InterPro" id="IPR013507">
    <property type="entry name" value="DNA_mismatch_S5_2-like"/>
</dbReference>
<dbReference type="InterPro" id="IPR036890">
    <property type="entry name" value="HATPase_C_sf"/>
</dbReference>
<dbReference type="InterPro" id="IPR002099">
    <property type="entry name" value="MutL/Mlh/PMS"/>
</dbReference>
<dbReference type="InterPro" id="IPR038973">
    <property type="entry name" value="MutL/Mlh/Pms-like"/>
</dbReference>
<dbReference type="InterPro" id="IPR014790">
    <property type="entry name" value="MutL_C"/>
</dbReference>
<dbReference type="InterPro" id="IPR042120">
    <property type="entry name" value="MutL_C_dimsub"/>
</dbReference>
<dbReference type="InterPro" id="IPR042121">
    <property type="entry name" value="MutL_C_regsub"/>
</dbReference>
<dbReference type="InterPro" id="IPR037198">
    <property type="entry name" value="MutL_C_sf"/>
</dbReference>
<dbReference type="InterPro" id="IPR020568">
    <property type="entry name" value="Ribosomal_Su5_D2-typ_SF"/>
</dbReference>
<dbReference type="InterPro" id="IPR014721">
    <property type="entry name" value="Ribsml_uS5_D2-typ_fold_subgr"/>
</dbReference>
<dbReference type="NCBIfam" id="TIGR00585">
    <property type="entry name" value="mutl"/>
    <property type="match status" value="1"/>
</dbReference>
<dbReference type="NCBIfam" id="NF000953">
    <property type="entry name" value="PRK00095.2-4"/>
    <property type="match status" value="1"/>
</dbReference>
<dbReference type="PANTHER" id="PTHR10073">
    <property type="entry name" value="DNA MISMATCH REPAIR PROTEIN MLH, PMS, MUTL"/>
    <property type="match status" value="1"/>
</dbReference>
<dbReference type="PANTHER" id="PTHR10073:SF12">
    <property type="entry name" value="DNA MISMATCH REPAIR PROTEIN MLH1"/>
    <property type="match status" value="1"/>
</dbReference>
<dbReference type="Pfam" id="PF01119">
    <property type="entry name" value="DNA_mis_repair"/>
    <property type="match status" value="1"/>
</dbReference>
<dbReference type="Pfam" id="PF13589">
    <property type="entry name" value="HATPase_c_3"/>
    <property type="match status" value="1"/>
</dbReference>
<dbReference type="Pfam" id="PF08676">
    <property type="entry name" value="MutL_C"/>
    <property type="match status" value="1"/>
</dbReference>
<dbReference type="SMART" id="SM01340">
    <property type="entry name" value="DNA_mis_repair"/>
    <property type="match status" value="1"/>
</dbReference>
<dbReference type="SMART" id="SM00853">
    <property type="entry name" value="MutL_C"/>
    <property type="match status" value="1"/>
</dbReference>
<dbReference type="SUPFAM" id="SSF55874">
    <property type="entry name" value="ATPase domain of HSP90 chaperone/DNA topoisomerase II/histidine kinase"/>
    <property type="match status" value="1"/>
</dbReference>
<dbReference type="SUPFAM" id="SSF118116">
    <property type="entry name" value="DNA mismatch repair protein MutL"/>
    <property type="match status" value="1"/>
</dbReference>
<dbReference type="SUPFAM" id="SSF54211">
    <property type="entry name" value="Ribosomal protein S5 domain 2-like"/>
    <property type="match status" value="1"/>
</dbReference>
<dbReference type="PROSITE" id="PS00058">
    <property type="entry name" value="DNA_MISMATCH_REPAIR_1"/>
    <property type="match status" value="1"/>
</dbReference>
<proteinExistence type="inferred from homology"/>
<evidence type="ECO:0000255" key="1">
    <source>
        <dbReference type="HAMAP-Rule" id="MF_00149"/>
    </source>
</evidence>
<evidence type="ECO:0000256" key="2">
    <source>
        <dbReference type="SAM" id="MobiDB-lite"/>
    </source>
</evidence>
<organism>
    <name type="scientific">Beijerinckia indica subsp. indica (strain ATCC 9039 / DSM 1715 / NCIMB 8712)</name>
    <dbReference type="NCBI Taxonomy" id="395963"/>
    <lineage>
        <taxon>Bacteria</taxon>
        <taxon>Pseudomonadati</taxon>
        <taxon>Pseudomonadota</taxon>
        <taxon>Alphaproteobacteria</taxon>
        <taxon>Hyphomicrobiales</taxon>
        <taxon>Beijerinckiaceae</taxon>
        <taxon>Beijerinckia</taxon>
    </lineage>
</organism>
<sequence>MTIRRLDPVLIDRIAAGEVIERPAAAVKELVENALDAQASEIDVVLEGGGKTLIRVTDNGCGMSAEDLELSVERHATSKLPDGDLFAIATLGFRGEALPSIGSVSVLSLTSRMETATHGVALSVEHGRKQTVIPCGQPRGTRIEVRELFRTTPARLKFLKGDRAEARAAADAVQRLAMAHPTRRFTFTSTDTAGFDYLPCAEGPEGLLARIGAVLGKDFEANALPVEAEREGIILEGFIGLPTWHRANGLAQYLFVNGRPVRDKLLTGAVRAAYMDYLPAGRYPALALFLRCDPQEVDVNVHPAKAEVRFRDQGLVRGLLVGALKQTLQQAMHRATPDGGRVALGLLAMHSAGQGQRPVSSASMPSASRQAPTMPPRDWIKEGVQDWDWRQSPARPQNPPQNPPPGDRIEMSGSLPLGFAETPAGLNGDSGKELSEAASETPHDEPLGFARAQLHETYIVAQTRDGFVLVDQHAAHERLVYERLKQARAAQTVERQILLLPTIVELPEADVERLVDAASMLADFGLVVESFGPGALAVREIPIVLKDGSVPALIHDLANQLQEDDKALIPLERKLDHVLATFACHHSVRAGRRLGIEEMNALLREMERTPGSGQCNHGRPTYIELKLGDIERLFGRG</sequence>
<feature type="chain" id="PRO_1000096629" description="DNA mismatch repair protein MutL">
    <location>
        <begin position="1"/>
        <end position="637"/>
    </location>
</feature>
<feature type="region of interest" description="Disordered" evidence="2">
    <location>
        <begin position="353"/>
        <end position="444"/>
    </location>
</feature>
<feature type="compositionally biased region" description="Polar residues" evidence="2">
    <location>
        <begin position="353"/>
        <end position="371"/>
    </location>
</feature>
<feature type="compositionally biased region" description="Basic and acidic residues" evidence="2">
    <location>
        <begin position="378"/>
        <end position="389"/>
    </location>
</feature>
<feature type="compositionally biased region" description="Pro residues" evidence="2">
    <location>
        <begin position="396"/>
        <end position="406"/>
    </location>
</feature>
<feature type="compositionally biased region" description="Basic and acidic residues" evidence="2">
    <location>
        <begin position="430"/>
        <end position="444"/>
    </location>
</feature>
<protein>
    <recommendedName>
        <fullName evidence="1">DNA mismatch repair protein MutL</fullName>
    </recommendedName>
</protein>
<gene>
    <name evidence="1" type="primary">mutL</name>
    <name type="ordered locus">Bind_1011</name>
</gene>
<comment type="function">
    <text evidence="1">This protein is involved in the repair of mismatches in DNA. It is required for dam-dependent methyl-directed DNA mismatch repair. May act as a 'molecular matchmaker', a protein that promotes the formation of a stable complex between two or more DNA-binding proteins in an ATP-dependent manner without itself being part of a final effector complex.</text>
</comment>
<comment type="similarity">
    <text evidence="1">Belongs to the DNA mismatch repair MutL/HexB family.</text>
</comment>
<accession>B2II71</accession>
<reference key="1">
    <citation type="journal article" date="2010" name="J. Bacteriol.">
        <title>Complete genome sequence of Beijerinckia indica subsp. indica.</title>
        <authorList>
            <person name="Tamas I."/>
            <person name="Dedysh S.N."/>
            <person name="Liesack W."/>
            <person name="Stott M.B."/>
            <person name="Alam M."/>
            <person name="Murrell J.C."/>
            <person name="Dunfield P.F."/>
        </authorList>
    </citation>
    <scope>NUCLEOTIDE SEQUENCE [LARGE SCALE GENOMIC DNA]</scope>
    <source>
        <strain>ATCC 9039 / DSM 1715 / NCIMB 8712</strain>
    </source>
</reference>
<name>MUTL_BEII9</name>